<evidence type="ECO:0000255" key="1"/>
<organism>
    <name type="scientific">Pasteurella multocida (strain Pm70)</name>
    <dbReference type="NCBI Taxonomy" id="272843"/>
    <lineage>
        <taxon>Bacteria</taxon>
        <taxon>Pseudomonadati</taxon>
        <taxon>Pseudomonadota</taxon>
        <taxon>Gammaproteobacteria</taxon>
        <taxon>Pasteurellales</taxon>
        <taxon>Pasteurellaceae</taxon>
        <taxon>Pasteurella</taxon>
    </lineage>
</organism>
<name>Y1972_PASMU</name>
<reference key="1">
    <citation type="journal article" date="2001" name="Proc. Natl. Acad. Sci. U.S.A.">
        <title>Complete genomic sequence of Pasteurella multocida Pm70.</title>
        <authorList>
            <person name="May B.J."/>
            <person name="Zhang Q."/>
            <person name="Li L.L."/>
            <person name="Paustian M.L."/>
            <person name="Whittam T.S."/>
            <person name="Kapur V."/>
        </authorList>
    </citation>
    <scope>NUCLEOTIDE SEQUENCE [LARGE SCALE GENOMIC DNA]</scope>
    <source>
        <strain>Pm70</strain>
    </source>
</reference>
<feature type="signal peptide" evidence="1">
    <location>
        <begin position="1"/>
        <end position="19"/>
    </location>
</feature>
<feature type="chain" id="PRO_0000014188" description="Uncharacterized protein PM1972">
    <location>
        <begin position="20"/>
        <end position="71"/>
    </location>
</feature>
<dbReference type="EMBL" id="AE004439">
    <property type="protein sequence ID" value="AAK04056.1"/>
    <property type="molecule type" value="Genomic_DNA"/>
</dbReference>
<dbReference type="STRING" id="272843.PM1972"/>
<dbReference type="EnsemblBacteria" id="AAK04056">
    <property type="protein sequence ID" value="AAK04056"/>
    <property type="gene ID" value="PM1972"/>
</dbReference>
<dbReference type="KEGG" id="pmu:PM1972"/>
<dbReference type="HOGENOM" id="CLU_2736432_0_0_6"/>
<dbReference type="Proteomes" id="UP000000809">
    <property type="component" value="Chromosome"/>
</dbReference>
<protein>
    <recommendedName>
        <fullName>Uncharacterized protein PM1972</fullName>
    </recommendedName>
</protein>
<sequence length="71" mass="8662">MFLFPSLLSSFCITLRSISCDLFIFQIEYSFLLPRNKMKNKKLKMKYFYFILINLFSNCDLTHFFQNRNDL</sequence>
<gene>
    <name type="ordered locus">PM1972</name>
</gene>
<accession>Q9CJM5</accession>
<proteinExistence type="inferred from homology"/>
<keyword id="KW-1185">Reference proteome</keyword>
<keyword id="KW-0732">Signal</keyword>